<evidence type="ECO:0000250" key="1"/>
<evidence type="ECO:0000256" key="2">
    <source>
        <dbReference type="SAM" id="MobiDB-lite"/>
    </source>
</evidence>
<evidence type="ECO:0000269" key="3">
    <source>
    </source>
</evidence>
<evidence type="ECO:0000269" key="4">
    <source>
    </source>
</evidence>
<evidence type="ECO:0000269" key="5">
    <source>
    </source>
</evidence>
<evidence type="ECO:0000269" key="6">
    <source>
    </source>
</evidence>
<evidence type="ECO:0000269" key="7">
    <source>
    </source>
</evidence>
<evidence type="ECO:0000305" key="8"/>
<accession>Q04418</accession>
<accession>D6VTE8</accession>
<reference key="1">
    <citation type="journal article" date="1997" name="Nature">
        <title>The nucleotide sequence of Saccharomyces cerevisiae chromosome IV.</title>
        <authorList>
            <person name="Jacq C."/>
            <person name="Alt-Moerbe J."/>
            <person name="Andre B."/>
            <person name="Arnold W."/>
            <person name="Bahr A."/>
            <person name="Ballesta J.P.G."/>
            <person name="Bargues M."/>
            <person name="Baron L."/>
            <person name="Becker A."/>
            <person name="Biteau N."/>
            <person name="Bloecker H."/>
            <person name="Blugeon C."/>
            <person name="Boskovic J."/>
            <person name="Brandt P."/>
            <person name="Brueckner M."/>
            <person name="Buitrago M.J."/>
            <person name="Coster F."/>
            <person name="Delaveau T."/>
            <person name="del Rey F."/>
            <person name="Dujon B."/>
            <person name="Eide L.G."/>
            <person name="Garcia-Cantalejo J.M."/>
            <person name="Goffeau A."/>
            <person name="Gomez-Peris A."/>
            <person name="Granotier C."/>
            <person name="Hanemann V."/>
            <person name="Hankeln T."/>
            <person name="Hoheisel J.D."/>
            <person name="Jaeger W."/>
            <person name="Jimenez A."/>
            <person name="Jonniaux J.-L."/>
            <person name="Kraemer C."/>
            <person name="Kuester H."/>
            <person name="Laamanen P."/>
            <person name="Legros Y."/>
            <person name="Louis E.J."/>
            <person name="Moeller-Rieker S."/>
            <person name="Monnet A."/>
            <person name="Moro M."/>
            <person name="Mueller-Auer S."/>
            <person name="Nussbaumer B."/>
            <person name="Paricio N."/>
            <person name="Paulin L."/>
            <person name="Perea J."/>
            <person name="Perez-Alonso M."/>
            <person name="Perez-Ortin J.E."/>
            <person name="Pohl T.M."/>
            <person name="Prydz H."/>
            <person name="Purnelle B."/>
            <person name="Rasmussen S.W."/>
            <person name="Remacha M.A."/>
            <person name="Revuelta J.L."/>
            <person name="Rieger M."/>
            <person name="Salom D."/>
            <person name="Saluz H.P."/>
            <person name="Saiz J.E."/>
            <person name="Saren A.-M."/>
            <person name="Schaefer M."/>
            <person name="Scharfe M."/>
            <person name="Schmidt E.R."/>
            <person name="Schneider C."/>
            <person name="Scholler P."/>
            <person name="Schwarz S."/>
            <person name="Soler-Mira A."/>
            <person name="Urrestarazu L.A."/>
            <person name="Verhasselt P."/>
            <person name="Vissers S."/>
            <person name="Voet M."/>
            <person name="Volckaert G."/>
            <person name="Wagner G."/>
            <person name="Wambutt R."/>
            <person name="Wedler E."/>
            <person name="Wedler H."/>
            <person name="Woelfl S."/>
            <person name="Harris D.E."/>
            <person name="Bowman S."/>
            <person name="Brown D."/>
            <person name="Churcher C.M."/>
            <person name="Connor R."/>
            <person name="Dedman K."/>
            <person name="Gentles S."/>
            <person name="Hamlin N."/>
            <person name="Hunt S."/>
            <person name="Jones L."/>
            <person name="McDonald S."/>
            <person name="Murphy L.D."/>
            <person name="Niblett D."/>
            <person name="Odell C."/>
            <person name="Oliver K."/>
            <person name="Rajandream M.A."/>
            <person name="Richards C."/>
            <person name="Shore L."/>
            <person name="Walsh S.V."/>
            <person name="Barrell B.G."/>
            <person name="Dietrich F.S."/>
            <person name="Mulligan J.T."/>
            <person name="Allen E."/>
            <person name="Araujo R."/>
            <person name="Aviles E."/>
            <person name="Berno A."/>
            <person name="Carpenter J."/>
            <person name="Chen E."/>
            <person name="Cherry J.M."/>
            <person name="Chung E."/>
            <person name="Duncan M."/>
            <person name="Hunicke-Smith S."/>
            <person name="Hyman R.W."/>
            <person name="Komp C."/>
            <person name="Lashkari D."/>
            <person name="Lew H."/>
            <person name="Lin D."/>
            <person name="Mosedale D."/>
            <person name="Nakahara K."/>
            <person name="Namath A."/>
            <person name="Oefner P."/>
            <person name="Oh C."/>
            <person name="Petel F.X."/>
            <person name="Roberts D."/>
            <person name="Schramm S."/>
            <person name="Schroeder M."/>
            <person name="Shogren T."/>
            <person name="Shroff N."/>
            <person name="Winant A."/>
            <person name="Yelton M.A."/>
            <person name="Botstein D."/>
            <person name="Davis R.W."/>
            <person name="Johnston M."/>
            <person name="Andrews S."/>
            <person name="Brinkman R."/>
            <person name="Cooper J."/>
            <person name="Ding H."/>
            <person name="Du Z."/>
            <person name="Favello A."/>
            <person name="Fulton L."/>
            <person name="Gattung S."/>
            <person name="Greco T."/>
            <person name="Hallsworth K."/>
            <person name="Hawkins J."/>
            <person name="Hillier L.W."/>
            <person name="Jier M."/>
            <person name="Johnson D."/>
            <person name="Johnston L."/>
            <person name="Kirsten J."/>
            <person name="Kucaba T."/>
            <person name="Langston Y."/>
            <person name="Latreille P."/>
            <person name="Le T."/>
            <person name="Mardis E."/>
            <person name="Menezes S."/>
            <person name="Miller N."/>
            <person name="Nhan M."/>
            <person name="Pauley A."/>
            <person name="Peluso D."/>
            <person name="Rifkin L."/>
            <person name="Riles L."/>
            <person name="Taich A."/>
            <person name="Trevaskis E."/>
            <person name="Vignati D."/>
            <person name="Wilcox L."/>
            <person name="Wohldman P."/>
            <person name="Vaudin M."/>
            <person name="Wilson R."/>
            <person name="Waterston R."/>
            <person name="Albermann K."/>
            <person name="Hani J."/>
            <person name="Heumann K."/>
            <person name="Kleine K."/>
            <person name="Mewes H.-W."/>
            <person name="Zollner A."/>
            <person name="Zaccaria P."/>
        </authorList>
    </citation>
    <scope>NUCLEOTIDE SEQUENCE [LARGE SCALE GENOMIC DNA]</scope>
    <source>
        <strain>ATCC 204508 / S288c</strain>
    </source>
</reference>
<reference key="2">
    <citation type="journal article" date="2014" name="G3 (Bethesda)">
        <title>The reference genome sequence of Saccharomyces cerevisiae: Then and now.</title>
        <authorList>
            <person name="Engel S.R."/>
            <person name="Dietrich F.S."/>
            <person name="Fisk D.G."/>
            <person name="Binkley G."/>
            <person name="Balakrishnan R."/>
            <person name="Costanzo M.C."/>
            <person name="Dwight S.S."/>
            <person name="Hitz B.C."/>
            <person name="Karra K."/>
            <person name="Nash R.S."/>
            <person name="Weng S."/>
            <person name="Wong E.D."/>
            <person name="Lloyd P."/>
            <person name="Skrzypek M.S."/>
            <person name="Miyasato S.R."/>
            <person name="Simison M."/>
            <person name="Cherry J.M."/>
        </authorList>
    </citation>
    <scope>GENOME REANNOTATION</scope>
    <scope>SEQUENCE REVISION TO 192-194</scope>
    <source>
        <strain>ATCC 204508 / S288c</strain>
    </source>
</reference>
<reference key="3">
    <citation type="journal article" date="2002" name="Cell Calcium">
        <title>Genome-wide analysis of yeast transcription upon calcium shortage.</title>
        <authorList>
            <person name="Lombardia L.J."/>
            <person name="Becerra M."/>
            <person name="Rodriguez-Belmonte E."/>
            <person name="Hauser N.C."/>
            <person name="Cerdan M.E."/>
        </authorList>
    </citation>
    <scope>INDUCTION</scope>
</reference>
<reference key="4">
    <citation type="journal article" date="2003" name="Mol. Cell">
        <title>Assigning function to yeast proteins by integration of technologies.</title>
        <authorList>
            <person name="Hazbun T.R."/>
            <person name="Malmstroem L."/>
            <person name="Anderson S."/>
            <person name="Graczyk B.J."/>
            <person name="Fox B."/>
            <person name="Riffle M."/>
            <person name="Sundin B.A."/>
            <person name="Aranda J.D."/>
            <person name="McDonald W.H."/>
            <person name="Chiu C.-H."/>
            <person name="Snydsman B.E."/>
            <person name="Bradley P."/>
            <person name="Muller E.G.D."/>
            <person name="Fields S."/>
            <person name="Baker D."/>
            <person name="Yates J.R. III"/>
            <person name="Davis T.N."/>
        </authorList>
    </citation>
    <scope>IDENTIFICATION BY MASS SPECTROMETRY</scope>
    <scope>SUBCELLULAR LOCATION [LARGE SCALE ANALYSIS]</scope>
</reference>
<reference key="5">
    <citation type="journal article" date="2003" name="Nature">
        <title>Global analysis of protein localization in budding yeast.</title>
        <authorList>
            <person name="Huh W.-K."/>
            <person name="Falvo J.V."/>
            <person name="Gerke L.C."/>
            <person name="Carroll A.S."/>
            <person name="Howson R.W."/>
            <person name="Weissman J.S."/>
            <person name="O'Shea E.K."/>
        </authorList>
    </citation>
    <scope>SUBCELLULAR LOCATION [LARGE SCALE ANALYSIS]</scope>
</reference>
<reference key="6">
    <citation type="journal article" date="2003" name="Nature">
        <title>Global analysis of protein expression in yeast.</title>
        <authorList>
            <person name="Ghaemmaghami S."/>
            <person name="Huh W.-K."/>
            <person name="Bower K."/>
            <person name="Howson R.W."/>
            <person name="Belle A."/>
            <person name="Dephoure N."/>
            <person name="O'Shea E.K."/>
            <person name="Weissman J.S."/>
        </authorList>
    </citation>
    <scope>LEVEL OF PROTEIN EXPRESSION [LARGE SCALE ANALYSIS]</scope>
</reference>
<reference key="7">
    <citation type="journal article" date="2004" name="Mol. Cell. Biol.">
        <title>RPAP1, a novel human RNA polymerase II-associated protein affinity purified with recombinant wild-type and mutated polymerase subunits.</title>
        <authorList>
            <person name="Jeronimo C."/>
            <person name="Langelier M.-F."/>
            <person name="Zeghouf M."/>
            <person name="Cojocaru M."/>
            <person name="Bergeron D."/>
            <person name="Baali D."/>
            <person name="Forget D."/>
            <person name="Mnaimneh S."/>
            <person name="Davierwala A.P."/>
            <person name="Pootoolal J."/>
            <person name="Chandy M."/>
            <person name="Canadien V."/>
            <person name="Beattie B.K."/>
            <person name="Richards D.P."/>
            <person name="Workman J.L."/>
            <person name="Hughes T.R."/>
            <person name="Greenblatt J."/>
            <person name="Coulombe B."/>
        </authorList>
    </citation>
    <scope>FUNCTION</scope>
</reference>
<reference key="8">
    <citation type="journal article" date="2009" name="Science">
        <title>Global analysis of Cdk1 substrate phosphorylation sites provides insights into evolution.</title>
        <authorList>
            <person name="Holt L.J."/>
            <person name="Tuch B.B."/>
            <person name="Villen J."/>
            <person name="Johnson A.D."/>
            <person name="Gygi S.P."/>
            <person name="Morgan D.O."/>
        </authorList>
    </citation>
    <scope>IDENTIFICATION BY MASS SPECTROMETRY [LARGE SCALE ANALYSIS]</scope>
</reference>
<name>RBA50_YEAST</name>
<comment type="function">
    <text evidence="1 7">Forms an interface between the RNA polymerase II enzyme and chaperone/scaffolding proteins, suggesting that it is required to connect RNA polymerase II to regulators of protein complex formation.</text>
</comment>
<comment type="subcellular location">
    <subcellularLocation>
        <location evidence="4 6">Cytoplasm</location>
    </subcellularLocation>
</comment>
<comment type="induction">
    <text evidence="3">Down-regulated at low calcium levels.</text>
</comment>
<comment type="miscellaneous">
    <text evidence="5">Present with 688 molecules/cell in log phase SD medium.</text>
</comment>
<comment type="similarity">
    <text evidence="8">Belongs to the RPAP1 family.</text>
</comment>
<feature type="chain" id="PRO_0000255972" description="RNA polymerase II-associated protein RBA50">
    <location>
        <begin position="1"/>
        <end position="439"/>
    </location>
</feature>
<feature type="region of interest" description="Disordered" evidence="2">
    <location>
        <begin position="1"/>
        <end position="35"/>
    </location>
</feature>
<feature type="region of interest" description="Disordered" evidence="2">
    <location>
        <begin position="49"/>
        <end position="79"/>
    </location>
</feature>
<feature type="compositionally biased region" description="Polar residues" evidence="2">
    <location>
        <begin position="15"/>
        <end position="30"/>
    </location>
</feature>
<feature type="sequence conflict" description="In Ref. 1; AAB64966." evidence="8" ref="1">
    <original>EEA</original>
    <variation>GEG</variation>
    <location>
        <begin position="192"/>
        <end position="194"/>
    </location>
</feature>
<dbReference type="EMBL" id="U33057">
    <property type="protein sequence ID" value="AAB64966.1"/>
    <property type="molecule type" value="Genomic_DNA"/>
</dbReference>
<dbReference type="EMBL" id="BK006938">
    <property type="protein sequence ID" value="DAA12358.2"/>
    <property type="molecule type" value="Genomic_DNA"/>
</dbReference>
<dbReference type="PIR" id="S69582">
    <property type="entry name" value="S69582"/>
</dbReference>
<dbReference type="RefSeq" id="NP_010816.4">
    <property type="nucleotide sequence ID" value="NM_001180835.4"/>
</dbReference>
<dbReference type="BioGRID" id="32576">
    <property type="interactions" value="202"/>
</dbReference>
<dbReference type="DIP" id="DIP-4127N"/>
<dbReference type="FunCoup" id="Q04418">
    <property type="interactions" value="221"/>
</dbReference>
<dbReference type="IntAct" id="Q04418">
    <property type="interactions" value="14"/>
</dbReference>
<dbReference type="STRING" id="4932.YDR527W"/>
<dbReference type="iPTMnet" id="Q04418"/>
<dbReference type="PaxDb" id="4932-YDR527W"/>
<dbReference type="PeptideAtlas" id="Q04418"/>
<dbReference type="EnsemblFungi" id="YDR527W_mRNA">
    <property type="protein sequence ID" value="YDR527W"/>
    <property type="gene ID" value="YDR527W"/>
</dbReference>
<dbReference type="GeneID" id="852139"/>
<dbReference type="KEGG" id="sce:YDR527W"/>
<dbReference type="AGR" id="SGD:S000002935"/>
<dbReference type="SGD" id="S000002935">
    <property type="gene designation" value="RBA50"/>
</dbReference>
<dbReference type="VEuPathDB" id="FungiDB:YDR527W"/>
<dbReference type="eggNOG" id="KOG1894">
    <property type="taxonomic scope" value="Eukaryota"/>
</dbReference>
<dbReference type="GeneTree" id="ENSGT00390000007594"/>
<dbReference type="HOGENOM" id="CLU_031074_0_0_1"/>
<dbReference type="InParanoid" id="Q04418"/>
<dbReference type="OMA" id="TQRCIAI"/>
<dbReference type="OrthoDB" id="348201at2759"/>
<dbReference type="BioCyc" id="YEAST:G3O-30041-MONOMER"/>
<dbReference type="BioGRID-ORCS" id="852139">
    <property type="hits" value="5 hits in 10 CRISPR screens"/>
</dbReference>
<dbReference type="PRO" id="PR:Q04418"/>
<dbReference type="Proteomes" id="UP000002311">
    <property type="component" value="Chromosome IV"/>
</dbReference>
<dbReference type="RNAct" id="Q04418">
    <property type="molecule type" value="protein"/>
</dbReference>
<dbReference type="GO" id="GO:0005737">
    <property type="term" value="C:cytoplasm"/>
    <property type="evidence" value="ECO:0007005"/>
    <property type="project" value="SGD"/>
</dbReference>
<dbReference type="GO" id="GO:0006366">
    <property type="term" value="P:transcription by RNA polymerase II"/>
    <property type="evidence" value="ECO:0000315"/>
    <property type="project" value="SGD"/>
</dbReference>
<dbReference type="InterPro" id="IPR013929">
    <property type="entry name" value="RNA_pol_II_AP1_C"/>
</dbReference>
<dbReference type="InterPro" id="IPR013930">
    <property type="entry name" value="RNA_pol_II_AP1_N"/>
</dbReference>
<dbReference type="InterPro" id="IPR039913">
    <property type="entry name" value="RPAP1/Rba50"/>
</dbReference>
<dbReference type="PANTHER" id="PTHR21483">
    <property type="entry name" value="RNA POLYMERASE II-ASSOCIATED PROTEIN 1"/>
    <property type="match status" value="1"/>
</dbReference>
<dbReference type="PANTHER" id="PTHR21483:SF18">
    <property type="entry name" value="RNA POLYMERASE II-ASSOCIATED PROTEIN 1"/>
    <property type="match status" value="1"/>
</dbReference>
<dbReference type="Pfam" id="PF08620">
    <property type="entry name" value="RPAP1_C"/>
    <property type="match status" value="1"/>
</dbReference>
<dbReference type="Pfam" id="PF08621">
    <property type="entry name" value="RPAP1_N"/>
    <property type="match status" value="1"/>
</dbReference>
<organism>
    <name type="scientific">Saccharomyces cerevisiae (strain ATCC 204508 / S288c)</name>
    <name type="common">Baker's yeast</name>
    <dbReference type="NCBI Taxonomy" id="559292"/>
    <lineage>
        <taxon>Eukaryota</taxon>
        <taxon>Fungi</taxon>
        <taxon>Dikarya</taxon>
        <taxon>Ascomycota</taxon>
        <taxon>Saccharomycotina</taxon>
        <taxon>Saccharomycetes</taxon>
        <taxon>Saccharomycetales</taxon>
        <taxon>Saccharomycetaceae</taxon>
        <taxon>Saccharomyces</taxon>
    </lineage>
</organism>
<sequence>MDLLGDIVEKDTSDSVESNDNGTLSTNNCGTGFPELYKPKKISSWKERLREKRAQKKKTSGKDAEKQQTSTDAPLSEAKSIHNENIKVLQGMSDEQIVQEREDLYNSLDPKLIAKLLKNINKRAKDENNTPLFAEIEGASGTWVGGNKQGIYDLPPLDDEDVDVALEIRPMLGKDAKHVQFEEAGKEKDVEEEAKTNDDVDDIAPLDFQMAQCIDHMKNEELFKDVHFIKEESQNEINLEKLDINDPNFNDKLHEKYFPDLPKEVDKLKWMQPVQQKTDKNYIIEDVSECRFDFNGDLVPPTRQIDSTIHSGLHHHSDSPELAGYTIVELEHLARSTFPSQRCIAIQTLGRILYKLGQKSYYQLVPEIDADTYKEDGSISNVMDKIYSMFWDLIKDGKVIESLEISSDEKFTRNLSVRNYAIDALWLWKQGGGDFRTKK</sequence>
<gene>
    <name type="primary">RBA50</name>
    <name type="ordered locus">YDR527W</name>
</gene>
<proteinExistence type="evidence at protein level"/>
<protein>
    <recommendedName>
        <fullName>RNA polymerase II-associated protein RBA50</fullName>
    </recommendedName>
    <alternativeName>
        <fullName>RNA polymerase II-associated protein of 50 kDa</fullName>
    </alternativeName>
</protein>
<keyword id="KW-0963">Cytoplasm</keyword>
<keyword id="KW-1185">Reference proteome</keyword>
<keyword id="KW-0804">Transcription</keyword>
<keyword id="KW-0805">Transcription regulation</keyword>